<keyword id="KW-0158">Chromosome</keyword>
<keyword id="KW-0238">DNA-binding</keyword>
<keyword id="KW-0539">Nucleus</keyword>
<keyword id="KW-1185">Reference proteome</keyword>
<keyword id="KW-0779">Telomere</keyword>
<protein>
    <recommendedName>
        <fullName>CST complex subunit TEN1</fullName>
    </recommendedName>
    <alternativeName>
        <fullName>Protein telomeric pathways with STN1 homolog</fullName>
    </alternativeName>
    <alternativeName>
        <fullName>Telomere length regulation protein TEN1 homolog</fullName>
    </alternativeName>
</protein>
<comment type="function">
    <text evidence="1 3">Component of the CST complex proposed to act as a specialized replication factor promoting DNA replication under conditions of replication stress or natural replication barriers such as the telomere duplex. The CST complex binds single-stranded DNA with high affinity in a sequence-independent manner, while isolated subunits bind DNA with low affinity by themselves. Initially the CST complex has been proposed to protect telomeres from DNA degradation (PubMed:19854130). However, the CST complex has been shown to be involved in several aspects of telomere replication. The CST complex inhibits telomerase and is involved in telomere length homeostasis; it is proposed to bind to newly telomerase-synthesized 3' overhangs and to terminate telomerase action implicating the association with the ACD:POT1 complex thus interfering with its telomerase stimulation activity. The CST complex is also proposed to be involved in fill-in synthesis of the telomeric C-strand probably implicating recruitment and activation of DNA polymerase alpha. The CST complex facilitates recovery from many forms of exogenous DNA damage; seems to be involved in the re-initiation of DNA replication at repaired forks and/or dormant origins (By similarity).</text>
</comment>
<comment type="subunit">
    <text evidence="3">Component of the CST complex, composed of TEN1, CTC1 and STN1; in the complex interacts directly with STN1.</text>
</comment>
<comment type="subcellular location">
    <subcellularLocation>
        <location evidence="3">Nucleus</location>
    </subcellularLocation>
    <subcellularLocation>
        <location evidence="3">Chromosome</location>
        <location evidence="3">Telomere</location>
    </subcellularLocation>
</comment>
<comment type="similarity">
    <text evidence="4">Belongs to the TEN1 family.</text>
</comment>
<organism>
    <name type="scientific">Mus musculus</name>
    <name type="common">Mouse</name>
    <dbReference type="NCBI Taxonomy" id="10090"/>
    <lineage>
        <taxon>Eukaryota</taxon>
        <taxon>Metazoa</taxon>
        <taxon>Chordata</taxon>
        <taxon>Craniata</taxon>
        <taxon>Vertebrata</taxon>
        <taxon>Euteleostomi</taxon>
        <taxon>Mammalia</taxon>
        <taxon>Eutheria</taxon>
        <taxon>Euarchontoglires</taxon>
        <taxon>Glires</taxon>
        <taxon>Rodentia</taxon>
        <taxon>Myomorpha</taxon>
        <taxon>Muroidea</taxon>
        <taxon>Muridae</taxon>
        <taxon>Murinae</taxon>
        <taxon>Mus</taxon>
        <taxon>Mus</taxon>
    </lineage>
</organism>
<accession>Q9D7K2</accession>
<reference key="1">
    <citation type="journal article" date="2005" name="Science">
        <title>The transcriptional landscape of the mammalian genome.</title>
        <authorList>
            <person name="Carninci P."/>
            <person name="Kasukawa T."/>
            <person name="Katayama S."/>
            <person name="Gough J."/>
            <person name="Frith M.C."/>
            <person name="Maeda N."/>
            <person name="Oyama R."/>
            <person name="Ravasi T."/>
            <person name="Lenhard B."/>
            <person name="Wells C."/>
            <person name="Kodzius R."/>
            <person name="Shimokawa K."/>
            <person name="Bajic V.B."/>
            <person name="Brenner S.E."/>
            <person name="Batalov S."/>
            <person name="Forrest A.R."/>
            <person name="Zavolan M."/>
            <person name="Davis M.J."/>
            <person name="Wilming L.G."/>
            <person name="Aidinis V."/>
            <person name="Allen J.E."/>
            <person name="Ambesi-Impiombato A."/>
            <person name="Apweiler R."/>
            <person name="Aturaliya R.N."/>
            <person name="Bailey T.L."/>
            <person name="Bansal M."/>
            <person name="Baxter L."/>
            <person name="Beisel K.W."/>
            <person name="Bersano T."/>
            <person name="Bono H."/>
            <person name="Chalk A.M."/>
            <person name="Chiu K.P."/>
            <person name="Choudhary V."/>
            <person name="Christoffels A."/>
            <person name="Clutterbuck D.R."/>
            <person name="Crowe M.L."/>
            <person name="Dalla E."/>
            <person name="Dalrymple B.P."/>
            <person name="de Bono B."/>
            <person name="Della Gatta G."/>
            <person name="di Bernardo D."/>
            <person name="Down T."/>
            <person name="Engstrom P."/>
            <person name="Fagiolini M."/>
            <person name="Faulkner G."/>
            <person name="Fletcher C.F."/>
            <person name="Fukushima T."/>
            <person name="Furuno M."/>
            <person name="Futaki S."/>
            <person name="Gariboldi M."/>
            <person name="Georgii-Hemming P."/>
            <person name="Gingeras T.R."/>
            <person name="Gojobori T."/>
            <person name="Green R.E."/>
            <person name="Gustincich S."/>
            <person name="Harbers M."/>
            <person name="Hayashi Y."/>
            <person name="Hensch T.K."/>
            <person name="Hirokawa N."/>
            <person name="Hill D."/>
            <person name="Huminiecki L."/>
            <person name="Iacono M."/>
            <person name="Ikeo K."/>
            <person name="Iwama A."/>
            <person name="Ishikawa T."/>
            <person name="Jakt M."/>
            <person name="Kanapin A."/>
            <person name="Katoh M."/>
            <person name="Kawasawa Y."/>
            <person name="Kelso J."/>
            <person name="Kitamura H."/>
            <person name="Kitano H."/>
            <person name="Kollias G."/>
            <person name="Krishnan S.P."/>
            <person name="Kruger A."/>
            <person name="Kummerfeld S.K."/>
            <person name="Kurochkin I.V."/>
            <person name="Lareau L.F."/>
            <person name="Lazarevic D."/>
            <person name="Lipovich L."/>
            <person name="Liu J."/>
            <person name="Liuni S."/>
            <person name="McWilliam S."/>
            <person name="Madan Babu M."/>
            <person name="Madera M."/>
            <person name="Marchionni L."/>
            <person name="Matsuda H."/>
            <person name="Matsuzawa S."/>
            <person name="Miki H."/>
            <person name="Mignone F."/>
            <person name="Miyake S."/>
            <person name="Morris K."/>
            <person name="Mottagui-Tabar S."/>
            <person name="Mulder N."/>
            <person name="Nakano N."/>
            <person name="Nakauchi H."/>
            <person name="Ng P."/>
            <person name="Nilsson R."/>
            <person name="Nishiguchi S."/>
            <person name="Nishikawa S."/>
            <person name="Nori F."/>
            <person name="Ohara O."/>
            <person name="Okazaki Y."/>
            <person name="Orlando V."/>
            <person name="Pang K.C."/>
            <person name="Pavan W.J."/>
            <person name="Pavesi G."/>
            <person name="Pesole G."/>
            <person name="Petrovsky N."/>
            <person name="Piazza S."/>
            <person name="Reed J."/>
            <person name="Reid J.F."/>
            <person name="Ring B.Z."/>
            <person name="Ringwald M."/>
            <person name="Rost B."/>
            <person name="Ruan Y."/>
            <person name="Salzberg S.L."/>
            <person name="Sandelin A."/>
            <person name="Schneider C."/>
            <person name="Schoenbach C."/>
            <person name="Sekiguchi K."/>
            <person name="Semple C.A."/>
            <person name="Seno S."/>
            <person name="Sessa L."/>
            <person name="Sheng Y."/>
            <person name="Shibata Y."/>
            <person name="Shimada H."/>
            <person name="Shimada K."/>
            <person name="Silva D."/>
            <person name="Sinclair B."/>
            <person name="Sperling S."/>
            <person name="Stupka E."/>
            <person name="Sugiura K."/>
            <person name="Sultana R."/>
            <person name="Takenaka Y."/>
            <person name="Taki K."/>
            <person name="Tammoja K."/>
            <person name="Tan S.L."/>
            <person name="Tang S."/>
            <person name="Taylor M.S."/>
            <person name="Tegner J."/>
            <person name="Teichmann S.A."/>
            <person name="Ueda H.R."/>
            <person name="van Nimwegen E."/>
            <person name="Verardo R."/>
            <person name="Wei C.L."/>
            <person name="Yagi K."/>
            <person name="Yamanishi H."/>
            <person name="Zabarovsky E."/>
            <person name="Zhu S."/>
            <person name="Zimmer A."/>
            <person name="Hide W."/>
            <person name="Bult C."/>
            <person name="Grimmond S.M."/>
            <person name="Teasdale R.D."/>
            <person name="Liu E.T."/>
            <person name="Brusic V."/>
            <person name="Quackenbush J."/>
            <person name="Wahlestedt C."/>
            <person name="Mattick J.S."/>
            <person name="Hume D.A."/>
            <person name="Kai C."/>
            <person name="Sasaki D."/>
            <person name="Tomaru Y."/>
            <person name="Fukuda S."/>
            <person name="Kanamori-Katayama M."/>
            <person name="Suzuki M."/>
            <person name="Aoki J."/>
            <person name="Arakawa T."/>
            <person name="Iida J."/>
            <person name="Imamura K."/>
            <person name="Itoh M."/>
            <person name="Kato T."/>
            <person name="Kawaji H."/>
            <person name="Kawagashira N."/>
            <person name="Kawashima T."/>
            <person name="Kojima M."/>
            <person name="Kondo S."/>
            <person name="Konno H."/>
            <person name="Nakano K."/>
            <person name="Ninomiya N."/>
            <person name="Nishio T."/>
            <person name="Okada M."/>
            <person name="Plessy C."/>
            <person name="Shibata K."/>
            <person name="Shiraki T."/>
            <person name="Suzuki S."/>
            <person name="Tagami M."/>
            <person name="Waki K."/>
            <person name="Watahiki A."/>
            <person name="Okamura-Oho Y."/>
            <person name="Suzuki H."/>
            <person name="Kawai J."/>
            <person name="Hayashizaki Y."/>
        </authorList>
    </citation>
    <scope>NUCLEOTIDE SEQUENCE [LARGE SCALE MRNA]</scope>
    <source>
        <strain>C57BL/6J</strain>
        <strain>DBA/2J</strain>
        <tissue>Tongue</tissue>
    </source>
</reference>
<reference key="2">
    <citation type="journal article" date="2009" name="PLoS Biol.">
        <title>Lineage-specific biology revealed by a finished genome assembly of the mouse.</title>
        <authorList>
            <person name="Church D.M."/>
            <person name="Goodstadt L."/>
            <person name="Hillier L.W."/>
            <person name="Zody M.C."/>
            <person name="Goldstein S."/>
            <person name="She X."/>
            <person name="Bult C.J."/>
            <person name="Agarwala R."/>
            <person name="Cherry J.L."/>
            <person name="DiCuccio M."/>
            <person name="Hlavina W."/>
            <person name="Kapustin Y."/>
            <person name="Meric P."/>
            <person name="Maglott D."/>
            <person name="Birtle Z."/>
            <person name="Marques A.C."/>
            <person name="Graves T."/>
            <person name="Zhou S."/>
            <person name="Teague B."/>
            <person name="Potamousis K."/>
            <person name="Churas C."/>
            <person name="Place M."/>
            <person name="Herschleb J."/>
            <person name="Runnheim R."/>
            <person name="Forrest D."/>
            <person name="Amos-Landgraf J."/>
            <person name="Schwartz D.C."/>
            <person name="Cheng Z."/>
            <person name="Lindblad-Toh K."/>
            <person name="Eichler E.E."/>
            <person name="Ponting C.P."/>
        </authorList>
    </citation>
    <scope>NUCLEOTIDE SEQUENCE [LARGE SCALE GENOMIC DNA]</scope>
    <source>
        <strain>C57BL/6J</strain>
    </source>
</reference>
<reference key="3">
    <citation type="journal article" date="2004" name="Genome Res.">
        <title>The status, quality, and expansion of the NIH full-length cDNA project: the Mammalian Gene Collection (MGC).</title>
        <authorList>
            <consortium name="The MGC Project Team"/>
        </authorList>
    </citation>
    <scope>NUCLEOTIDE SEQUENCE [LARGE SCALE MRNA]</scope>
    <source>
        <strain>C57BL/6J</strain>
        <tissue>Mammary gland</tissue>
    </source>
</reference>
<reference key="4">
    <citation type="journal article" date="2009" name="Mol. Cell">
        <title>RPA-like mammalian Ctc1-Stn1-Ten1 complex binds to single-stranded DNA and protects telomeres independently of the Pot1 pathway.</title>
        <authorList>
            <person name="Miyake Y."/>
            <person name="Nakamura M."/>
            <person name="Nabetani A."/>
            <person name="Shimamura S."/>
            <person name="Tamura M."/>
            <person name="Yonehara S."/>
            <person name="Saito M."/>
            <person name="Ishikawa F."/>
        </authorList>
    </citation>
    <scope>FUNCTION</scope>
    <scope>IDENTIFICATION BY MASS SPECTROMETRY</scope>
    <scope>IDENTIFICATION IN THE CST COMPLEX</scope>
    <scope>SUBCELLULAR LOCATION</scope>
</reference>
<reference key="5">
    <citation type="journal article" date="2010" name="Cell">
        <title>A tissue-specific atlas of mouse protein phosphorylation and expression.</title>
        <authorList>
            <person name="Huttlin E.L."/>
            <person name="Jedrychowski M.P."/>
            <person name="Elias J.E."/>
            <person name="Goswami T."/>
            <person name="Rad R."/>
            <person name="Beausoleil S.A."/>
            <person name="Villen J."/>
            <person name="Haas W."/>
            <person name="Sowa M.E."/>
            <person name="Gygi S.P."/>
        </authorList>
    </citation>
    <scope>IDENTIFICATION BY MASS SPECTROMETRY [LARGE SCALE ANALYSIS]</scope>
    <source>
        <tissue>Brain</tissue>
        <tissue>Lung</tissue>
        <tissue>Spleen</tissue>
        <tissue>Testis</tissue>
    </source>
</reference>
<proteinExistence type="evidence at protein level"/>
<evidence type="ECO:0000250" key="1">
    <source>
        <dbReference type="UniProtKB" id="Q86WV5"/>
    </source>
</evidence>
<evidence type="ECO:0000256" key="2">
    <source>
        <dbReference type="SAM" id="MobiDB-lite"/>
    </source>
</evidence>
<evidence type="ECO:0000269" key="3">
    <source>
    </source>
</evidence>
<evidence type="ECO:0000305" key="4"/>
<feature type="chain" id="PRO_0000392993" description="CST complex subunit TEN1">
    <location>
        <begin position="1"/>
        <end position="161"/>
    </location>
</feature>
<feature type="DNA-binding region" description="OB">
    <location>
        <begin position="1"/>
        <end position="120"/>
    </location>
</feature>
<feature type="region of interest" description="Disordered" evidence="2">
    <location>
        <begin position="119"/>
        <end position="161"/>
    </location>
</feature>
<feature type="compositionally biased region" description="Polar residues" evidence="2">
    <location>
        <begin position="126"/>
        <end position="143"/>
    </location>
</feature>
<feature type="compositionally biased region" description="Polar residues" evidence="2">
    <location>
        <begin position="150"/>
        <end position="161"/>
    </location>
</feature>
<gene>
    <name type="primary">Ten1</name>
</gene>
<name>TEN1L_MOUSE</name>
<sequence>MLPKPGVYYFPWEVSDGHVPEGSTLRTFGRLYLYDMARSLMTLAAPQKPDQCQLLVCTNLVEPFEAHVNFLYMVLGDLERMEGGAFVVRARLLTCVEGMDLSLLEKAILEQRRHLQKRQQPIGDASTLQTPTPAPQSIPSDSLSLEPENRGQQVPLPQTLD</sequence>
<dbReference type="EMBL" id="AK009156">
    <property type="protein sequence ID" value="BAB26112.1"/>
    <property type="molecule type" value="mRNA"/>
</dbReference>
<dbReference type="EMBL" id="AK146257">
    <property type="protein sequence ID" value="BAE27018.1"/>
    <property type="molecule type" value="mRNA"/>
</dbReference>
<dbReference type="EMBL" id="AL669925">
    <property type="status" value="NOT_ANNOTATED_CDS"/>
    <property type="molecule type" value="Genomic_DNA"/>
</dbReference>
<dbReference type="EMBL" id="BC027639">
    <property type="protein sequence ID" value="AAH27639.1"/>
    <property type="molecule type" value="mRNA"/>
</dbReference>
<dbReference type="CCDS" id="CCDS48982.1"/>
<dbReference type="RefSeq" id="NP_081383.1">
    <property type="nucleotide sequence ID" value="NM_027107.1"/>
</dbReference>
<dbReference type="SMR" id="Q9D7K2"/>
<dbReference type="BioGRID" id="213509">
    <property type="interactions" value="9"/>
</dbReference>
<dbReference type="ComplexPortal" id="CPX-2130">
    <property type="entry name" value="CST complex"/>
</dbReference>
<dbReference type="FunCoup" id="Q9D7K2">
    <property type="interactions" value="756"/>
</dbReference>
<dbReference type="IntAct" id="Q9D7K2">
    <property type="interactions" value="8"/>
</dbReference>
<dbReference type="STRING" id="10090.ENSMUSP00000021130"/>
<dbReference type="PaxDb" id="10090-ENSMUSP00000021130"/>
<dbReference type="PeptideAtlas" id="Q9D7K2"/>
<dbReference type="ProteomicsDB" id="263102"/>
<dbReference type="Pumba" id="Q9D7K2"/>
<dbReference type="Ensembl" id="ENSMUST00000021130.7">
    <property type="protein sequence ID" value="ENSMUSP00000021130.7"/>
    <property type="gene ID" value="ENSMUSG00000020778.13"/>
</dbReference>
<dbReference type="GeneID" id="69535"/>
<dbReference type="KEGG" id="mmu:69535"/>
<dbReference type="UCSC" id="uc007mkn.2">
    <property type="organism name" value="mouse"/>
</dbReference>
<dbReference type="AGR" id="MGI:1916785"/>
<dbReference type="CTD" id="100134934"/>
<dbReference type="MGI" id="MGI:1916785">
    <property type="gene designation" value="Ten1"/>
</dbReference>
<dbReference type="VEuPathDB" id="HostDB:ENSMUSG00000020778"/>
<dbReference type="eggNOG" id="ENOG502S4ES">
    <property type="taxonomic scope" value="Eukaryota"/>
</dbReference>
<dbReference type="GeneTree" id="ENSGT00390000017589"/>
<dbReference type="HOGENOM" id="CLU_139244_0_0_1"/>
<dbReference type="InParanoid" id="Q9D7K2"/>
<dbReference type="OMA" id="PWEVNSG"/>
<dbReference type="OrthoDB" id="342190at2759"/>
<dbReference type="PhylomeDB" id="Q9D7K2"/>
<dbReference type="TreeFam" id="TF333010"/>
<dbReference type="Reactome" id="R-MMU-174411">
    <property type="pathway name" value="Polymerase switching on the C-strand of the telomere"/>
</dbReference>
<dbReference type="Reactome" id="R-MMU-174430">
    <property type="pathway name" value="Telomere C-strand synthesis initiation"/>
</dbReference>
<dbReference type="BioGRID-ORCS" id="69535">
    <property type="hits" value="11 hits in 79 CRISPR screens"/>
</dbReference>
<dbReference type="PRO" id="PR:Q9D7K2"/>
<dbReference type="Proteomes" id="UP000000589">
    <property type="component" value="Chromosome 11"/>
</dbReference>
<dbReference type="RNAct" id="Q9D7K2">
    <property type="molecule type" value="protein"/>
</dbReference>
<dbReference type="Bgee" id="ENSMUSG00000020778">
    <property type="expression patterns" value="Expressed in lip and 246 other cell types or tissues"/>
</dbReference>
<dbReference type="GO" id="GO:0000781">
    <property type="term" value="C:chromosome, telomeric region"/>
    <property type="evidence" value="ECO:0000314"/>
    <property type="project" value="UniProtKB"/>
</dbReference>
<dbReference type="GO" id="GO:1990879">
    <property type="term" value="C:CST complex"/>
    <property type="evidence" value="ECO:0000314"/>
    <property type="project" value="UniProtKB"/>
</dbReference>
<dbReference type="GO" id="GO:0005634">
    <property type="term" value="C:nucleus"/>
    <property type="evidence" value="ECO:0000314"/>
    <property type="project" value="UniProtKB"/>
</dbReference>
<dbReference type="GO" id="GO:0003697">
    <property type="term" value="F:single-stranded DNA binding"/>
    <property type="evidence" value="ECO:0007669"/>
    <property type="project" value="InterPro"/>
</dbReference>
<dbReference type="FunFam" id="2.40.50.140:FF:000203">
    <property type="entry name" value="TEN1 subunit of CST complex"/>
    <property type="match status" value="1"/>
</dbReference>
<dbReference type="Gene3D" id="2.40.50.140">
    <property type="entry name" value="Nucleic acid-binding proteins"/>
    <property type="match status" value="1"/>
</dbReference>
<dbReference type="InterPro" id="IPR012340">
    <property type="entry name" value="NA-bd_OB-fold"/>
</dbReference>
<dbReference type="InterPro" id="IPR029146">
    <property type="entry name" value="Ten1_animal_plant"/>
</dbReference>
<dbReference type="PANTHER" id="PTHR33905">
    <property type="entry name" value="CST COMPLEX SUBUNIT TEN1"/>
    <property type="match status" value="1"/>
</dbReference>
<dbReference type="PANTHER" id="PTHR33905:SF1">
    <property type="entry name" value="CST COMPLEX SUBUNIT TEN1"/>
    <property type="match status" value="1"/>
</dbReference>
<dbReference type="Pfam" id="PF15490">
    <property type="entry name" value="Ten1_2"/>
    <property type="match status" value="1"/>
</dbReference>